<feature type="chain" id="PRO_0000068493" description="Protein TrbI">
    <location>
        <begin position="1"/>
        <end position="128"/>
    </location>
</feature>
<feature type="transmembrane region" description="Helical" evidence="1">
    <location>
        <begin position="18"/>
        <end position="40"/>
    </location>
</feature>
<feature type="sequence conflict" description="In Ref. 3; BAA97955." evidence="4" ref="3">
    <original>S</original>
    <variation>T</variation>
    <location>
        <position position="113"/>
    </location>
</feature>
<evidence type="ECO:0000255" key="1"/>
<evidence type="ECO:0000269" key="2">
    <source>
    </source>
</evidence>
<evidence type="ECO:0000269" key="3">
    <source>
    </source>
</evidence>
<evidence type="ECO:0000305" key="4"/>
<evidence type="ECO:0000305" key="5">
    <source>
    </source>
</evidence>
<accession>P18006</accession>
<dbReference type="EMBL" id="M93106">
    <property type="protein sequence ID" value="AAA24688.1"/>
    <property type="molecule type" value="Genomic_DNA"/>
</dbReference>
<dbReference type="EMBL" id="U01159">
    <property type="protein sequence ID" value="AAC44211.1"/>
    <property type="molecule type" value="Genomic_DNA"/>
</dbReference>
<dbReference type="EMBL" id="AP001918">
    <property type="protein sequence ID" value="BAA97955.1"/>
    <property type="molecule type" value="Genomic_DNA"/>
</dbReference>
<dbReference type="EMBL" id="M30936">
    <property type="protein sequence ID" value="AAA24906.1"/>
    <property type="molecule type" value="Genomic_DNA"/>
</dbReference>
<dbReference type="PIR" id="A42938">
    <property type="entry name" value="A42938"/>
</dbReference>
<dbReference type="RefSeq" id="NP_061464.1">
    <property type="nucleotide sequence ID" value="NC_002483.1"/>
</dbReference>
<dbReference type="DIP" id="DIP-28101N"/>
<dbReference type="GO" id="GO:0005886">
    <property type="term" value="C:plasma membrane"/>
    <property type="evidence" value="ECO:0007669"/>
    <property type="project" value="UniProtKB-SubCell"/>
</dbReference>
<dbReference type="InterPro" id="IPR014115">
    <property type="entry name" value="TrbI_Ftype"/>
</dbReference>
<dbReference type="NCBIfam" id="NF010270">
    <property type="entry name" value="PRK13717.1"/>
    <property type="match status" value="1"/>
</dbReference>
<dbReference type="NCBIfam" id="TIGR02744">
    <property type="entry name" value="TrbI_Ftype"/>
    <property type="match status" value="1"/>
</dbReference>
<dbReference type="Pfam" id="PF09677">
    <property type="entry name" value="TrbI_Ftype"/>
    <property type="match status" value="1"/>
</dbReference>
<proteinExistence type="predicted"/>
<keyword id="KW-0997">Cell inner membrane</keyword>
<keyword id="KW-1003">Cell membrane</keyword>
<keyword id="KW-0472">Membrane</keyword>
<keyword id="KW-0614">Plasmid</keyword>
<keyword id="KW-0812">Transmembrane</keyword>
<keyword id="KW-1133">Transmembrane helix</keyword>
<organism>
    <name type="scientific">Escherichia coli (strain K12)</name>
    <dbReference type="NCBI Taxonomy" id="83333"/>
    <lineage>
        <taxon>Bacteria</taxon>
        <taxon>Pseudomonadati</taxon>
        <taxon>Pseudomonadota</taxon>
        <taxon>Gammaproteobacteria</taxon>
        <taxon>Enterobacterales</taxon>
        <taxon>Enterobacteriaceae</taxon>
        <taxon>Escherichia</taxon>
    </lineage>
</organism>
<sequence>MSSTQKPADVTAERRSHWWWTVPGCLAMVLLNAAVSYGIVRLNAPVTVAFNMKQTVDAFFDSASQKQLSEAQSKALSARFNTALEASLQAWQQKHHAVILVSPAVVQGAPDISREIQQDIARRMRAEP</sequence>
<reference key="1">
    <citation type="journal article" date="1992" name="J. Bacteriol.">
        <title>Characterization, localization, and sequence of F transfer region products: the pilus assembly gene product TraW and a new product, TrbI.</title>
        <authorList>
            <person name="Maneewannakul S."/>
            <person name="Maneewannakul K."/>
            <person name="Ippen-Ihler K."/>
        </authorList>
    </citation>
    <scope>NUCLEOTIDE SEQUENCE [GENOMIC DNA]</scope>
    <scope>FUNCTION</scope>
    <scope>SUBCELLULAR LOCATION</scope>
    <scope>DISRUPTION PHENOTYPE</scope>
    <source>
        <strain>K12</strain>
    </source>
</reference>
<reference key="2">
    <citation type="journal article" date="1994" name="Microbiol. Rev.">
        <title>Analysis of the sequence and gene products of the transfer region of the F sex factor.</title>
        <authorList>
            <person name="Frost L.S."/>
            <person name="Ippen-Ihler K."/>
            <person name="Skurray R.A."/>
        </authorList>
    </citation>
    <scope>NUCLEOTIDE SEQUENCE [GENOMIC DNA]</scope>
</reference>
<reference key="3">
    <citation type="submission" date="2000-04" db="EMBL/GenBank/DDBJ databases">
        <title>Complete nucleotide sequence of the F plasmid: its implications for organization and diversification of plasmid genomes.</title>
        <authorList>
            <person name="Shimizu H."/>
            <person name="Saitoh Y."/>
            <person name="Suda Y."/>
            <person name="Uehara K."/>
            <person name="Sampei G."/>
            <person name="Mizobuchi K."/>
        </authorList>
    </citation>
    <scope>NUCLEOTIDE SEQUENCE [LARGE SCALE GENOMIC DNA]</scope>
    <source>
        <strain>K12 / CR63</strain>
    </source>
</reference>
<reference key="4">
    <citation type="journal article" date="1990" name="Gene">
        <title>Nucleotide sequence of the F plasmid gene, traC, and identification of its product.</title>
        <authorList>
            <person name="Schandel K.A."/>
            <person name="Maneewannakul S."/>
            <person name="Vonder Haar R.A."/>
            <person name="Ippen-Ihler K."/>
            <person name="Webster R.E."/>
        </authorList>
    </citation>
    <scope>NUCLEOTIDE SEQUENCE [GENOMIC DNA] OF 1-112</scope>
    <source>
        <strain>K12</strain>
    </source>
</reference>
<reference key="5">
    <citation type="journal article" date="2014" name="Mol. Microbiol.">
        <title>The F pilus mediates a novel pathway of CDI toxin import.</title>
        <authorList>
            <person name="Beck C.M."/>
            <person name="Diner E.J."/>
            <person name="Kim J.J."/>
            <person name="Low D.A."/>
            <person name="Hayes C.S."/>
        </authorList>
    </citation>
    <scope>FUNCTION</scope>
    <scope>DISRUPTION PHENOTYPE</scope>
    <source>
        <strain>K12 / X90</strain>
        <plasmid>F</plasmid>
    </source>
</reference>
<geneLocation type="plasmid">
    <name>F</name>
</geneLocation>
<gene>
    <name type="primary">trbI</name>
    <name type="ordered locus">ECOK12F085</name>
</gene>
<name>TRBI_ECOLI</name>
<comment type="function">
    <text evidence="3 5">May influence the kinetics of pilus outgrowth and/or retraction (PubMed:1355084). Overexpression phenocopies the deletion mutation; i.e. causes resistance to F-pilus-specific phage and CdiA-CT toxin (PubMed:24889811).</text>
</comment>
<comment type="subcellular location">
    <subcellularLocation>
        <location evidence="2">Cell inner membrane</location>
        <topology evidence="5">Single-pass membrane protein</topology>
    </subcellularLocation>
</comment>
<comment type="disruption phenotype">
    <text evidence="2 3">Expresses approximately normal numbers of F pili that are unusually long, remains plasmid transfer proficient, displays increased resistance to F-pilus-specific phage (PubMed:1355084). Resistant to phage R17 and M13, conjugates at lower efficiency (about 10% of wild-type), resistant to CdiA-CT toxin (PubMed:24889811).</text>
</comment>
<protein>
    <recommendedName>
        <fullName>Protein TrbI</fullName>
    </recommendedName>
</protein>